<sequence length="439" mass="49421">MSYFPAVNHISYEGAKSDNPFAFKFYNPDEIVSGKTMAEHLRFSIAYWHTFTEALSDPFGAGTAIRPWNAYTGMDLAKARVEAAFEFFEKINVPYFCFHDVDIAPEGSSLKETYANLDVIVAMIKDYMKDSNTKLLWNTANNFTHPRFVGGAASSNEADVFAYSAAKVKKGLEIGKELGAENYVFWGGREGYESLLNTDLKLEMDNLGRFFHMAVDYAKEIGFDGQFLIEPKPKEPTTHQYDFDVATGYAFLQHYGLQDSFKFNIEANHATLAGHTFEHELRYARIHHMLGSVDANQGDPLLGWDTDEFPTDLYSTTLAMYEILQNGGLGRGGLNFDAKVRRGSFEADDLFFAHIAGMDSFAIGLKVAQQLIDDRVLEQFVDSRYQSYKEGIGREIVLGNTDFHQLEAHALSLGEIKTRSGRVERIKAIINQYLLNAFA</sequence>
<proteinExistence type="inferred from homology"/>
<gene>
    <name evidence="1" type="primary">xylA</name>
    <name type="ordered locus">ABC0572</name>
</gene>
<reference key="1">
    <citation type="submission" date="2003-10" db="EMBL/GenBank/DDBJ databases">
        <title>The complete genome sequence of the alkaliphilic Bacillus clausii KSM-K16.</title>
        <authorList>
            <person name="Takaki Y."/>
            <person name="Kageyama Y."/>
            <person name="Shimamura S."/>
            <person name="Suzuki H."/>
            <person name="Nishi S."/>
            <person name="Hatada Y."/>
            <person name="Kawai S."/>
            <person name="Ito S."/>
            <person name="Horikoshi K."/>
        </authorList>
    </citation>
    <scope>NUCLEOTIDE SEQUENCE [LARGE SCALE GENOMIC DNA]</scope>
    <source>
        <strain>KSM-K16</strain>
    </source>
</reference>
<comment type="catalytic activity">
    <reaction evidence="1">
        <text>alpha-D-xylose = alpha-D-xylulofuranose</text>
        <dbReference type="Rhea" id="RHEA:22816"/>
        <dbReference type="ChEBI" id="CHEBI:28518"/>
        <dbReference type="ChEBI" id="CHEBI:188998"/>
        <dbReference type="EC" id="5.3.1.5"/>
    </reaction>
</comment>
<comment type="cofactor">
    <cofactor evidence="1">
        <name>Mg(2+)</name>
        <dbReference type="ChEBI" id="CHEBI:18420"/>
    </cofactor>
    <text evidence="1">Binds 2 magnesium ions per subunit.</text>
</comment>
<comment type="subunit">
    <text evidence="1">Homotetramer.</text>
</comment>
<comment type="subcellular location">
    <subcellularLocation>
        <location evidence="1">Cytoplasm</location>
    </subcellularLocation>
</comment>
<comment type="similarity">
    <text evidence="1">Belongs to the xylose isomerase family.</text>
</comment>
<accession>Q5WKJ3</accession>
<organism>
    <name type="scientific">Shouchella clausii (strain KSM-K16)</name>
    <name type="common">Alkalihalobacillus clausii</name>
    <dbReference type="NCBI Taxonomy" id="66692"/>
    <lineage>
        <taxon>Bacteria</taxon>
        <taxon>Bacillati</taxon>
        <taxon>Bacillota</taxon>
        <taxon>Bacilli</taxon>
        <taxon>Bacillales</taxon>
        <taxon>Bacillaceae</taxon>
        <taxon>Shouchella</taxon>
    </lineage>
</organism>
<keyword id="KW-0119">Carbohydrate metabolism</keyword>
<keyword id="KW-0963">Cytoplasm</keyword>
<keyword id="KW-0413">Isomerase</keyword>
<keyword id="KW-0460">Magnesium</keyword>
<keyword id="KW-0479">Metal-binding</keyword>
<keyword id="KW-1185">Reference proteome</keyword>
<keyword id="KW-0859">Xylose metabolism</keyword>
<protein>
    <recommendedName>
        <fullName evidence="1">Xylose isomerase</fullName>
        <ecNumber evidence="1">5.3.1.5</ecNumber>
    </recommendedName>
</protein>
<evidence type="ECO:0000255" key="1">
    <source>
        <dbReference type="HAMAP-Rule" id="MF_00455"/>
    </source>
</evidence>
<dbReference type="EC" id="5.3.1.5" evidence="1"/>
<dbReference type="EMBL" id="AP006627">
    <property type="protein sequence ID" value="BAD63112.1"/>
    <property type="molecule type" value="Genomic_DNA"/>
</dbReference>
<dbReference type="RefSeq" id="WP_011245429.1">
    <property type="nucleotide sequence ID" value="NC_006582.1"/>
</dbReference>
<dbReference type="SMR" id="Q5WKJ3"/>
<dbReference type="STRING" id="66692.ABC0572"/>
<dbReference type="KEGG" id="bcl:ABC0572"/>
<dbReference type="eggNOG" id="COG2115">
    <property type="taxonomic scope" value="Bacteria"/>
</dbReference>
<dbReference type="HOGENOM" id="CLU_037261_1_0_9"/>
<dbReference type="OrthoDB" id="9763981at2"/>
<dbReference type="Proteomes" id="UP000001168">
    <property type="component" value="Chromosome"/>
</dbReference>
<dbReference type="GO" id="GO:0005737">
    <property type="term" value="C:cytoplasm"/>
    <property type="evidence" value="ECO:0007669"/>
    <property type="project" value="UniProtKB-SubCell"/>
</dbReference>
<dbReference type="GO" id="GO:0000287">
    <property type="term" value="F:magnesium ion binding"/>
    <property type="evidence" value="ECO:0007669"/>
    <property type="project" value="UniProtKB-UniRule"/>
</dbReference>
<dbReference type="GO" id="GO:0009045">
    <property type="term" value="F:xylose isomerase activity"/>
    <property type="evidence" value="ECO:0007669"/>
    <property type="project" value="UniProtKB-UniRule"/>
</dbReference>
<dbReference type="GO" id="GO:0042732">
    <property type="term" value="P:D-xylose metabolic process"/>
    <property type="evidence" value="ECO:0007669"/>
    <property type="project" value="UniProtKB-UniRule"/>
</dbReference>
<dbReference type="Gene3D" id="3.20.20.150">
    <property type="entry name" value="Divalent-metal-dependent TIM barrel enzymes"/>
    <property type="match status" value="1"/>
</dbReference>
<dbReference type="HAMAP" id="MF_00455">
    <property type="entry name" value="Xylose_isom_A"/>
    <property type="match status" value="1"/>
</dbReference>
<dbReference type="InterPro" id="IPR036237">
    <property type="entry name" value="Xyl_isomerase-like_sf"/>
</dbReference>
<dbReference type="InterPro" id="IPR013452">
    <property type="entry name" value="Xylose_isom_bac"/>
</dbReference>
<dbReference type="InterPro" id="IPR001998">
    <property type="entry name" value="Xylose_isomerase"/>
</dbReference>
<dbReference type="NCBIfam" id="NF003998">
    <property type="entry name" value="PRK05474.1"/>
    <property type="match status" value="1"/>
</dbReference>
<dbReference type="NCBIfam" id="TIGR02630">
    <property type="entry name" value="xylose_isom_A"/>
    <property type="match status" value="1"/>
</dbReference>
<dbReference type="PANTHER" id="PTHR48408">
    <property type="match status" value="1"/>
</dbReference>
<dbReference type="PANTHER" id="PTHR48408:SF1">
    <property type="entry name" value="XYLOSE ISOMERASE"/>
    <property type="match status" value="1"/>
</dbReference>
<dbReference type="PRINTS" id="PR00688">
    <property type="entry name" value="XYLOSISMRASE"/>
</dbReference>
<dbReference type="SUPFAM" id="SSF51658">
    <property type="entry name" value="Xylose isomerase-like"/>
    <property type="match status" value="1"/>
</dbReference>
<dbReference type="PROSITE" id="PS51415">
    <property type="entry name" value="XYLOSE_ISOMERASE"/>
    <property type="match status" value="1"/>
</dbReference>
<feature type="chain" id="PRO_0000236955" description="Xylose isomerase">
    <location>
        <begin position="1"/>
        <end position="439"/>
    </location>
</feature>
<feature type="active site" evidence="1">
    <location>
        <position position="99"/>
    </location>
</feature>
<feature type="active site" evidence="1">
    <location>
        <position position="102"/>
    </location>
</feature>
<feature type="binding site" evidence="1">
    <location>
        <position position="230"/>
    </location>
    <ligand>
        <name>Mg(2+)</name>
        <dbReference type="ChEBI" id="CHEBI:18420"/>
        <label>1</label>
    </ligand>
</feature>
<feature type="binding site" evidence="1">
    <location>
        <position position="266"/>
    </location>
    <ligand>
        <name>Mg(2+)</name>
        <dbReference type="ChEBI" id="CHEBI:18420"/>
        <label>1</label>
    </ligand>
</feature>
<feature type="binding site" evidence="1">
    <location>
        <position position="266"/>
    </location>
    <ligand>
        <name>Mg(2+)</name>
        <dbReference type="ChEBI" id="CHEBI:18420"/>
        <label>2</label>
    </ligand>
</feature>
<feature type="binding site" evidence="1">
    <location>
        <position position="269"/>
    </location>
    <ligand>
        <name>Mg(2+)</name>
        <dbReference type="ChEBI" id="CHEBI:18420"/>
        <label>2</label>
    </ligand>
</feature>
<feature type="binding site" evidence="1">
    <location>
        <position position="294"/>
    </location>
    <ligand>
        <name>Mg(2+)</name>
        <dbReference type="ChEBI" id="CHEBI:18420"/>
        <label>1</label>
    </ligand>
</feature>
<feature type="binding site" evidence="1">
    <location>
        <position position="305"/>
    </location>
    <ligand>
        <name>Mg(2+)</name>
        <dbReference type="ChEBI" id="CHEBI:18420"/>
        <label>2</label>
    </ligand>
</feature>
<feature type="binding site" evidence="1">
    <location>
        <position position="307"/>
    </location>
    <ligand>
        <name>Mg(2+)</name>
        <dbReference type="ChEBI" id="CHEBI:18420"/>
        <label>2</label>
    </ligand>
</feature>
<feature type="binding site" evidence="1">
    <location>
        <position position="337"/>
    </location>
    <ligand>
        <name>Mg(2+)</name>
        <dbReference type="ChEBI" id="CHEBI:18420"/>
        <label>1</label>
    </ligand>
</feature>
<name>XYLA_SHOC1</name>